<name>LOV_DROME</name>
<comment type="function">
    <text evidence="4">Has a regulatory role during midline cell development.</text>
</comment>
<comment type="subcellular location">
    <subcellularLocation>
        <location evidence="2">Nucleus</location>
    </subcellularLocation>
</comment>
<comment type="tissue specificity">
    <text evidence="4 5">Initially expressed at blastoderm stage, transient accumulation at dorso-lateral positions of the embryo and differences along the longitudinal axis. At later stages of embryogenesis, expression is found exclusively in neural anlagen. Expressed in 4 posterior-most ventral unpaired median interneurons (VUM) neurons, VUM interneurons and one progeny of the median neuroblast (MNB).</text>
</comment>
<comment type="caution">
    <text evidence="7">Was originally thought to be a kinase on the basis of weak and non-significant similarities.</text>
</comment>
<comment type="sequence caution" evidence="6">
    <conflict type="frameshift">
        <sequence resource="EMBL-CDS" id="CAB64389"/>
    </conflict>
</comment>
<feature type="chain" id="PRO_0000072552" description="Protein jim lovell">
    <location>
        <begin position="1"/>
        <end position="1046"/>
    </location>
</feature>
<feature type="domain" description="BTB" evidence="1">
    <location>
        <begin position="140"/>
        <end position="205"/>
    </location>
</feature>
<feature type="domain" description="HTH psq-type" evidence="2">
    <location>
        <begin position="781"/>
        <end position="833"/>
    </location>
</feature>
<feature type="region of interest" description="Disordered" evidence="3">
    <location>
        <begin position="54"/>
        <end position="109"/>
    </location>
</feature>
<feature type="region of interest" description="Disordered" evidence="3">
    <location>
        <begin position="290"/>
        <end position="342"/>
    </location>
</feature>
<feature type="region of interest" description="Disordered" evidence="3">
    <location>
        <begin position="355"/>
        <end position="501"/>
    </location>
</feature>
<feature type="region of interest" description="Disordered" evidence="3">
    <location>
        <begin position="632"/>
        <end position="655"/>
    </location>
</feature>
<feature type="region of interest" description="Disordered" evidence="3">
    <location>
        <begin position="686"/>
        <end position="719"/>
    </location>
</feature>
<feature type="region of interest" description="Disordered" evidence="3">
    <location>
        <begin position="758"/>
        <end position="791"/>
    </location>
</feature>
<feature type="region of interest" description="Disordered" evidence="3">
    <location>
        <begin position="851"/>
        <end position="947"/>
    </location>
</feature>
<feature type="region of interest" description="Disordered" evidence="3">
    <location>
        <begin position="998"/>
        <end position="1046"/>
    </location>
</feature>
<feature type="compositionally biased region" description="Pro residues" evidence="3">
    <location>
        <begin position="65"/>
        <end position="75"/>
    </location>
</feature>
<feature type="compositionally biased region" description="Basic and acidic residues" evidence="3">
    <location>
        <begin position="294"/>
        <end position="303"/>
    </location>
</feature>
<feature type="compositionally biased region" description="Basic residues" evidence="3">
    <location>
        <begin position="315"/>
        <end position="324"/>
    </location>
</feature>
<feature type="compositionally biased region" description="Polar residues" evidence="3">
    <location>
        <begin position="365"/>
        <end position="380"/>
    </location>
</feature>
<feature type="compositionally biased region" description="Basic and acidic residues" evidence="3">
    <location>
        <begin position="383"/>
        <end position="412"/>
    </location>
</feature>
<feature type="compositionally biased region" description="Acidic residues" evidence="3">
    <location>
        <begin position="413"/>
        <end position="432"/>
    </location>
</feature>
<feature type="compositionally biased region" description="Basic and acidic residues" evidence="3">
    <location>
        <begin position="433"/>
        <end position="443"/>
    </location>
</feature>
<feature type="compositionally biased region" description="Low complexity" evidence="3">
    <location>
        <begin position="445"/>
        <end position="454"/>
    </location>
</feature>
<feature type="compositionally biased region" description="Gly residues" evidence="3">
    <location>
        <begin position="636"/>
        <end position="651"/>
    </location>
</feature>
<feature type="compositionally biased region" description="Pro residues" evidence="3">
    <location>
        <begin position="703"/>
        <end position="714"/>
    </location>
</feature>
<feature type="compositionally biased region" description="Basic residues" evidence="3">
    <location>
        <begin position="768"/>
        <end position="777"/>
    </location>
</feature>
<feature type="compositionally biased region" description="Basic and acidic residues" evidence="3">
    <location>
        <begin position="866"/>
        <end position="881"/>
    </location>
</feature>
<feature type="compositionally biased region" description="Low complexity" evidence="3">
    <location>
        <begin position="882"/>
        <end position="897"/>
    </location>
</feature>
<feature type="compositionally biased region" description="Low complexity" evidence="3">
    <location>
        <begin position="912"/>
        <end position="925"/>
    </location>
</feature>
<feature type="sequence conflict" description="In Ref. 1; CAB64389." evidence="6" ref="1">
    <original>P</original>
    <variation>L</variation>
    <location>
        <position position="64"/>
    </location>
</feature>
<feature type="sequence conflict" description="In Ref. 1; CAB64389." evidence="6" ref="1">
    <original>P</original>
    <variation>H</variation>
    <location>
        <position position="69"/>
    </location>
</feature>
<feature type="sequence conflict" description="In Ref. 1; CAB64389." evidence="6" ref="1">
    <original>PP</original>
    <variation>LL</variation>
    <location>
        <begin position="72"/>
        <end position="73"/>
    </location>
</feature>
<feature type="sequence conflict" description="In Ref. 1; CAB64389 and 6." evidence="6" ref="1 6">
    <original>D</original>
    <variation>H</variation>
    <location>
        <position position="328"/>
    </location>
</feature>
<feature type="sequence conflict" description="In Ref. 1; CAB64389 and 6." evidence="6" ref="1 6">
    <original>Q</original>
    <variation>R</variation>
    <location>
        <position position="365"/>
    </location>
</feature>
<feature type="sequence conflict" description="In Ref. 1; CAB64389 and 6." evidence="6" ref="1 6">
    <original>E</original>
    <variation>Q</variation>
    <location>
        <position position="395"/>
    </location>
</feature>
<feature type="sequence conflict" description="In Ref. 1; CAB64389 and 6." evidence="6" ref="1 6">
    <original>D</original>
    <variation>N</variation>
    <location>
        <position position="399"/>
    </location>
</feature>
<feature type="sequence conflict" description="In Ref. 1; CAB64389 and 6." evidence="6" ref="1 6">
    <original>R</original>
    <variation>S</variation>
    <location>
        <position position="402"/>
    </location>
</feature>
<feature type="sequence conflict" description="In Ref. 6." evidence="6" ref="6">
    <original>Q</original>
    <variation>E</variation>
    <location>
        <position position="590"/>
    </location>
</feature>
<feature type="sequence conflict" description="In Ref. 6." evidence="6" ref="6">
    <original>SM</original>
    <variation>MS</variation>
    <location>
        <begin position="663"/>
        <end position="664"/>
    </location>
</feature>
<feature type="sequence conflict" description="In Ref. 1; CAB64389 and 6." evidence="6" ref="1 6">
    <location>
        <begin position="672"/>
        <end position="675"/>
    </location>
</feature>
<feature type="sequence conflict" description="In Ref. 6." evidence="6" ref="6">
    <original>SP</original>
    <variation>PS</variation>
    <location>
        <begin position="691"/>
        <end position="692"/>
    </location>
</feature>
<organism>
    <name type="scientific">Drosophila melanogaster</name>
    <name type="common">Fruit fly</name>
    <dbReference type="NCBI Taxonomy" id="7227"/>
    <lineage>
        <taxon>Eukaryota</taxon>
        <taxon>Metazoa</taxon>
        <taxon>Ecdysozoa</taxon>
        <taxon>Arthropoda</taxon>
        <taxon>Hexapoda</taxon>
        <taxon>Insecta</taxon>
        <taxon>Pterygota</taxon>
        <taxon>Neoptera</taxon>
        <taxon>Endopterygota</taxon>
        <taxon>Diptera</taxon>
        <taxon>Brachycera</taxon>
        <taxon>Muscomorpha</taxon>
        <taxon>Ephydroidea</taxon>
        <taxon>Drosophilidae</taxon>
        <taxon>Drosophila</taxon>
        <taxon>Sophophora</taxon>
    </lineage>
</organism>
<sequence length="1046" mass="112308">MLKDAHQKLIKHRQSTKLSMTDFACQAAPVKQPLPLELPLPLSVQLQLLAKTPTSDHAPMHSTPPTTPPTPPPLPLNMSQSASAVTEAATPENSLPATPPSEGALAVPSAPQDHYSLRWNNHQNHILRAFDALLKTKTLVDVTLVCAETSIRAHKMVLSACSPFFQRVFAETPCKHPVIVLKDFRGWVVQAIVDFMYRGEISVPQQRLQTLIQAGESLQVRGLVESSVPEHTPTPAASPDDFGMLDTSMLSSTFEDECPTMVRPSKGGKLLMPSARLFGNASSAIAALGLRRKREQESDRDLESDQELGGSSPMPRRKQARPRRRSGDVPHDFTLNKTDAESLQTVIKHELLERAERDQEEAPDQDNSQGEAEKISSSPAKTLVERAKEQKSMKEEGSDQPRSLNENHHQLELDDEDDDDQDHEEEEEQDIEELIHTTNELRRQAAAAAANAAAMSPNPSPCLSDGPEDLCTTKKGKELISGPSSSADCESNNNNSSKLQDNNQRIMLSLKDIRQLNANPNPTAIHTPTSCSGGNNGLLTFPPPGLRPPGLPDSPPCHMEALEAQMHAAAAAAVAAAGSGEHPFHHMEHQMEMSLAAAAAAAAMHQREPRDPRDGRDHNAFASNLLGPMGMPPFGGHNGGHPGNSGPGNGCPGQAAHERLEESMNRLSKELGKEFGKEFGKEFGKEFGPASPMSLQGPFNAPDGPPHPPSPLPFPGMSSAMTLTPPHMFGLDSPLGLFPPGIDPGKLYNPLMEMSDPRDMPGGPPPFLKKKMPRPKGQHSAPRGGPPRSWTNTELTEALQHVWNKKMTTSQASRIFGIPYNSLLMYVRGKYGKSLKLEQLRKDCISGPPIEMLQMGIGGGSGGSTKNEKSKERKEKEKDKNSMSSNGSGGSANSQGGAPTSGSGPMQHSGELGPMGQLDLDLGLPLGPPGGPRSNSSEPDLLSAPNALFNPFNPQGFYPDFSGGFPGLPLSMLNLLPPAERHHAAAAMHHLGVSMDEDCKSVGSKQSSSVDEDYSGPGIPLSLEHRREISATGPPLTPSNGGTGHD</sequence>
<accession>P14083</accession>
<accession>A4UZV7</accession>
<accession>Q0E8V9</accession>
<accession>Q24002</accession>
<accession>Q7JPM0</accession>
<accession>Q7KA34</accession>
<accession>Q9U1H2</accession>
<accession>Q9W0W2</accession>
<gene>
    <name type="primary">lov</name>
    <name type="synonym">Tkr</name>
    <name type="ORF">CG16778</name>
</gene>
<evidence type="ECO:0000255" key="1">
    <source>
        <dbReference type="PROSITE-ProRule" id="PRU00037"/>
    </source>
</evidence>
<evidence type="ECO:0000255" key="2">
    <source>
        <dbReference type="PROSITE-ProRule" id="PRU00320"/>
    </source>
</evidence>
<evidence type="ECO:0000256" key="3">
    <source>
        <dbReference type="SAM" id="MobiDB-lite"/>
    </source>
</evidence>
<evidence type="ECO:0000269" key="4">
    <source>
    </source>
</evidence>
<evidence type="ECO:0000269" key="5">
    <source>
    </source>
</evidence>
<evidence type="ECO:0000305" key="6"/>
<evidence type="ECO:0000305" key="7">
    <source>
    </source>
</evidence>
<protein>
    <recommendedName>
        <fullName>Protein jim lovell</fullName>
    </recommendedName>
    <alternativeName>
        <fullName>Protein TKR</fullName>
    </alternativeName>
    <alternativeName>
        <fullName>Tyrosine kinase-related</fullName>
        <shortName>dTKR</shortName>
    </alternativeName>
</protein>
<dbReference type="EMBL" id="AJ252174">
    <property type="protein sequence ID" value="CAB64389.1"/>
    <property type="status" value="ALT_FRAME"/>
    <property type="molecule type" value="mRNA"/>
</dbReference>
<dbReference type="EMBL" id="AE013599">
    <property type="protein sequence ID" value="AAG22201.2"/>
    <property type="molecule type" value="Genomic_DNA"/>
</dbReference>
<dbReference type="EMBL" id="AE013599">
    <property type="protein sequence ID" value="AAM68329.1"/>
    <property type="molecule type" value="Genomic_DNA"/>
</dbReference>
<dbReference type="EMBL" id="AE013599">
    <property type="protein sequence ID" value="AAX52689.1"/>
    <property type="molecule type" value="Genomic_DNA"/>
</dbReference>
<dbReference type="EMBL" id="AY122101">
    <property type="protein sequence ID" value="AAM52613.1"/>
    <property type="molecule type" value="mRNA"/>
</dbReference>
<dbReference type="EMBL" id="U14400">
    <property type="protein sequence ID" value="AAA50835.1"/>
    <property type="molecule type" value="Genomic_DNA"/>
</dbReference>
<dbReference type="PIR" id="A27041">
    <property type="entry name" value="A27041"/>
</dbReference>
<dbReference type="RefSeq" id="NP_001014554.1">
    <property type="nucleotide sequence ID" value="NM_001014554.3"/>
</dbReference>
<dbReference type="RefSeq" id="NP_001286876.1">
    <property type="nucleotide sequence ID" value="NM_001299947.1"/>
</dbReference>
<dbReference type="RefSeq" id="NP_523865.2">
    <property type="nucleotide sequence ID" value="NM_079141.4"/>
</dbReference>
<dbReference type="RefSeq" id="NP_611994.3">
    <property type="nucleotide sequence ID" value="NM_138150.4"/>
</dbReference>
<dbReference type="RefSeq" id="NP_665704.1">
    <property type="nucleotide sequence ID" value="NM_145761.2"/>
</dbReference>
<dbReference type="SMR" id="P14083"/>
<dbReference type="BioGRID" id="63575">
    <property type="interactions" value="4"/>
</dbReference>
<dbReference type="FunCoup" id="P14083">
    <property type="interactions" value="46"/>
</dbReference>
<dbReference type="IntAct" id="P14083">
    <property type="interactions" value="5"/>
</dbReference>
<dbReference type="MINT" id="P14083"/>
<dbReference type="STRING" id="7227.FBpp0303264"/>
<dbReference type="GlyGen" id="P14083">
    <property type="glycosylation" value="3 sites"/>
</dbReference>
<dbReference type="PaxDb" id="7227-FBpp0072359"/>
<dbReference type="DNASU" id="38007"/>
<dbReference type="EnsemblMetazoa" id="FBtr0072457">
    <property type="protein sequence ID" value="FBpp0072359"/>
    <property type="gene ID" value="FBgn0266129"/>
</dbReference>
<dbReference type="EnsemblMetazoa" id="FBtr0072458">
    <property type="protein sequence ID" value="FBpp0072360"/>
    <property type="gene ID" value="FBgn0266129"/>
</dbReference>
<dbReference type="EnsemblMetazoa" id="FBtr0100126">
    <property type="protein sequence ID" value="FBpp0099472"/>
    <property type="gene ID" value="FBgn0266129"/>
</dbReference>
<dbReference type="EnsemblMetazoa" id="FBtr0343605">
    <property type="protein sequence ID" value="FBpp0310200"/>
    <property type="gene ID" value="FBgn0266129"/>
</dbReference>
<dbReference type="GeneID" id="38007"/>
<dbReference type="KEGG" id="dme:Dmel_CG16778"/>
<dbReference type="AGR" id="FB:FBgn0266129"/>
<dbReference type="CTD" id="38007"/>
<dbReference type="FlyBase" id="FBgn0266129">
    <property type="gene designation" value="lov"/>
</dbReference>
<dbReference type="VEuPathDB" id="VectorBase:FBgn0266129"/>
<dbReference type="eggNOG" id="ENOG502RG1U">
    <property type="taxonomic scope" value="Eukaryota"/>
</dbReference>
<dbReference type="HOGENOM" id="CLU_008582_0_0_1"/>
<dbReference type="InParanoid" id="P14083"/>
<dbReference type="OMA" id="HDFALNK"/>
<dbReference type="OrthoDB" id="10261408at2759"/>
<dbReference type="PhylomeDB" id="P14083"/>
<dbReference type="BioGRID-ORCS" id="38007">
    <property type="hits" value="0 hits in 1 CRISPR screen"/>
</dbReference>
<dbReference type="GenomeRNAi" id="38007"/>
<dbReference type="PRO" id="PR:P14083"/>
<dbReference type="Proteomes" id="UP000000803">
    <property type="component" value="Chromosome 2R"/>
</dbReference>
<dbReference type="Bgee" id="FBgn0266129">
    <property type="expression patterns" value="Expressed in transmedullary Y neuron TmY14 in insect head and 64 other cell types or tissues"/>
</dbReference>
<dbReference type="ExpressionAtlas" id="P14083">
    <property type="expression patterns" value="baseline and differential"/>
</dbReference>
<dbReference type="GO" id="GO:0005634">
    <property type="term" value="C:nucleus"/>
    <property type="evidence" value="ECO:0000318"/>
    <property type="project" value="GO_Central"/>
</dbReference>
<dbReference type="GO" id="GO:0003677">
    <property type="term" value="F:DNA binding"/>
    <property type="evidence" value="ECO:0007669"/>
    <property type="project" value="UniProtKB-KW"/>
</dbReference>
<dbReference type="GO" id="GO:0042332">
    <property type="term" value="P:gravitaxis"/>
    <property type="evidence" value="ECO:0000315"/>
    <property type="project" value="FlyBase"/>
</dbReference>
<dbReference type="GO" id="GO:0030536">
    <property type="term" value="P:larval feeding behavior"/>
    <property type="evidence" value="ECO:0000315"/>
    <property type="project" value="FlyBase"/>
</dbReference>
<dbReference type="GO" id="GO:0008346">
    <property type="term" value="P:larval walking behavior"/>
    <property type="evidence" value="ECO:0000315"/>
    <property type="project" value="FlyBase"/>
</dbReference>
<dbReference type="GO" id="GO:0008049">
    <property type="term" value="P:male courtship behavior"/>
    <property type="evidence" value="ECO:0000315"/>
    <property type="project" value="FlyBase"/>
</dbReference>
<dbReference type="GO" id="GO:0048060">
    <property type="term" value="P:negative gravitaxis"/>
    <property type="evidence" value="ECO:0000315"/>
    <property type="project" value="FlyBase"/>
</dbReference>
<dbReference type="GO" id="GO:0048477">
    <property type="term" value="P:oogenesis"/>
    <property type="evidence" value="ECO:0000315"/>
    <property type="project" value="FlyBase"/>
</dbReference>
<dbReference type="GO" id="GO:0006357">
    <property type="term" value="P:regulation of transcription by RNA polymerase II"/>
    <property type="evidence" value="ECO:0000318"/>
    <property type="project" value="GO_Central"/>
</dbReference>
<dbReference type="GO" id="GO:0007418">
    <property type="term" value="P:ventral midline development"/>
    <property type="evidence" value="ECO:0000315"/>
    <property type="project" value="UniProtKB"/>
</dbReference>
<dbReference type="CDD" id="cd18315">
    <property type="entry name" value="BTB_POZ_BAB-like"/>
    <property type="match status" value="1"/>
</dbReference>
<dbReference type="FunFam" id="3.30.710.10:FF:000165">
    <property type="entry name" value="Blast:Protein jim lovell"/>
    <property type="match status" value="1"/>
</dbReference>
<dbReference type="FunFam" id="1.10.10.60:FF:000019">
    <property type="entry name" value="Ligand-dependent corepressor isoform 1"/>
    <property type="match status" value="1"/>
</dbReference>
<dbReference type="Gene3D" id="1.10.10.60">
    <property type="entry name" value="Homeodomain-like"/>
    <property type="match status" value="1"/>
</dbReference>
<dbReference type="Gene3D" id="3.30.710.10">
    <property type="entry name" value="Potassium Channel Kv1.1, Chain A"/>
    <property type="match status" value="1"/>
</dbReference>
<dbReference type="InterPro" id="IPR000210">
    <property type="entry name" value="BTB/POZ_dom"/>
</dbReference>
<dbReference type="InterPro" id="IPR051095">
    <property type="entry name" value="Dros_DevTransReg"/>
</dbReference>
<dbReference type="InterPro" id="IPR009057">
    <property type="entry name" value="Homeodomain-like_sf"/>
</dbReference>
<dbReference type="InterPro" id="IPR007889">
    <property type="entry name" value="HTH_Psq"/>
</dbReference>
<dbReference type="InterPro" id="IPR011333">
    <property type="entry name" value="SKP1/BTB/POZ_sf"/>
</dbReference>
<dbReference type="PANTHER" id="PTHR23110">
    <property type="entry name" value="BTB DOMAIN TRANSCRIPTION FACTOR"/>
    <property type="match status" value="1"/>
</dbReference>
<dbReference type="PANTHER" id="PTHR23110:SF101">
    <property type="entry name" value="PROTEIN JIM LOVELL"/>
    <property type="match status" value="1"/>
</dbReference>
<dbReference type="Pfam" id="PF00651">
    <property type="entry name" value="BTB"/>
    <property type="match status" value="1"/>
</dbReference>
<dbReference type="Pfam" id="PF05225">
    <property type="entry name" value="HTH_psq"/>
    <property type="match status" value="1"/>
</dbReference>
<dbReference type="SMART" id="SM00225">
    <property type="entry name" value="BTB"/>
    <property type="match status" value="1"/>
</dbReference>
<dbReference type="SUPFAM" id="SSF46689">
    <property type="entry name" value="Homeodomain-like"/>
    <property type="match status" value="1"/>
</dbReference>
<dbReference type="SUPFAM" id="SSF54695">
    <property type="entry name" value="POZ domain"/>
    <property type="match status" value="1"/>
</dbReference>
<dbReference type="PROSITE" id="PS50097">
    <property type="entry name" value="BTB"/>
    <property type="match status" value="1"/>
</dbReference>
<dbReference type="PROSITE" id="PS50960">
    <property type="entry name" value="HTH_PSQ"/>
    <property type="match status" value="1"/>
</dbReference>
<proteinExistence type="evidence at transcript level"/>
<reference key="1">
    <citation type="journal article" date="2002" name="Development">
        <title>The bric a brac locus consists of two paralogous genes encoding BTB/POZ domain proteins and acts as a homeotic and morphogenetic regulator of imaginal development in Drosophila.</title>
        <authorList>
            <person name="Couderc J.-L.G."/>
            <person name="Godt D."/>
            <person name="Zollman S."/>
            <person name="Chen J."/>
            <person name="Li M."/>
            <person name="Tiong S."/>
            <person name="Cramton S.E."/>
            <person name="Sahut-Barnola I."/>
            <person name="Laski F.A."/>
        </authorList>
    </citation>
    <scope>NUCLEOTIDE SEQUENCE [MRNA]</scope>
    <source>
        <tissue>Embryo</tissue>
    </source>
</reference>
<reference key="2">
    <citation type="journal article" date="2000" name="Science">
        <title>The genome sequence of Drosophila melanogaster.</title>
        <authorList>
            <person name="Adams M.D."/>
            <person name="Celniker S.E."/>
            <person name="Holt R.A."/>
            <person name="Evans C.A."/>
            <person name="Gocayne J.D."/>
            <person name="Amanatides P.G."/>
            <person name="Scherer S.E."/>
            <person name="Li P.W."/>
            <person name="Hoskins R.A."/>
            <person name="Galle R.F."/>
            <person name="George R.A."/>
            <person name="Lewis S.E."/>
            <person name="Richards S."/>
            <person name="Ashburner M."/>
            <person name="Henderson S.N."/>
            <person name="Sutton G.G."/>
            <person name="Wortman J.R."/>
            <person name="Yandell M.D."/>
            <person name="Zhang Q."/>
            <person name="Chen L.X."/>
            <person name="Brandon R.C."/>
            <person name="Rogers Y.-H.C."/>
            <person name="Blazej R.G."/>
            <person name="Champe M."/>
            <person name="Pfeiffer B.D."/>
            <person name="Wan K.H."/>
            <person name="Doyle C."/>
            <person name="Baxter E.G."/>
            <person name="Helt G."/>
            <person name="Nelson C.R."/>
            <person name="Miklos G.L.G."/>
            <person name="Abril J.F."/>
            <person name="Agbayani A."/>
            <person name="An H.-J."/>
            <person name="Andrews-Pfannkoch C."/>
            <person name="Baldwin D."/>
            <person name="Ballew R.M."/>
            <person name="Basu A."/>
            <person name="Baxendale J."/>
            <person name="Bayraktaroglu L."/>
            <person name="Beasley E.M."/>
            <person name="Beeson K.Y."/>
            <person name="Benos P.V."/>
            <person name="Berman B.P."/>
            <person name="Bhandari D."/>
            <person name="Bolshakov S."/>
            <person name="Borkova D."/>
            <person name="Botchan M.R."/>
            <person name="Bouck J."/>
            <person name="Brokstein P."/>
            <person name="Brottier P."/>
            <person name="Burtis K.C."/>
            <person name="Busam D.A."/>
            <person name="Butler H."/>
            <person name="Cadieu E."/>
            <person name="Center A."/>
            <person name="Chandra I."/>
            <person name="Cherry J.M."/>
            <person name="Cawley S."/>
            <person name="Dahlke C."/>
            <person name="Davenport L.B."/>
            <person name="Davies P."/>
            <person name="de Pablos B."/>
            <person name="Delcher A."/>
            <person name="Deng Z."/>
            <person name="Mays A.D."/>
            <person name="Dew I."/>
            <person name="Dietz S.M."/>
            <person name="Dodson K."/>
            <person name="Doup L.E."/>
            <person name="Downes M."/>
            <person name="Dugan-Rocha S."/>
            <person name="Dunkov B.C."/>
            <person name="Dunn P."/>
            <person name="Durbin K.J."/>
            <person name="Evangelista C.C."/>
            <person name="Ferraz C."/>
            <person name="Ferriera S."/>
            <person name="Fleischmann W."/>
            <person name="Fosler C."/>
            <person name="Gabrielian A.E."/>
            <person name="Garg N.S."/>
            <person name="Gelbart W.M."/>
            <person name="Glasser K."/>
            <person name="Glodek A."/>
            <person name="Gong F."/>
            <person name="Gorrell J.H."/>
            <person name="Gu Z."/>
            <person name="Guan P."/>
            <person name="Harris M."/>
            <person name="Harris N.L."/>
            <person name="Harvey D.A."/>
            <person name="Heiman T.J."/>
            <person name="Hernandez J.R."/>
            <person name="Houck J."/>
            <person name="Hostin D."/>
            <person name="Houston K.A."/>
            <person name="Howland T.J."/>
            <person name="Wei M.-H."/>
            <person name="Ibegwam C."/>
            <person name="Jalali M."/>
            <person name="Kalush F."/>
            <person name="Karpen G.H."/>
            <person name="Ke Z."/>
            <person name="Kennison J.A."/>
            <person name="Ketchum K.A."/>
            <person name="Kimmel B.E."/>
            <person name="Kodira C.D."/>
            <person name="Kraft C.L."/>
            <person name="Kravitz S."/>
            <person name="Kulp D."/>
            <person name="Lai Z."/>
            <person name="Lasko P."/>
            <person name="Lei Y."/>
            <person name="Levitsky A.A."/>
            <person name="Li J.H."/>
            <person name="Li Z."/>
            <person name="Liang Y."/>
            <person name="Lin X."/>
            <person name="Liu X."/>
            <person name="Mattei B."/>
            <person name="McIntosh T.C."/>
            <person name="McLeod M.P."/>
            <person name="McPherson D."/>
            <person name="Merkulov G."/>
            <person name="Milshina N.V."/>
            <person name="Mobarry C."/>
            <person name="Morris J."/>
            <person name="Moshrefi A."/>
            <person name="Mount S.M."/>
            <person name="Moy M."/>
            <person name="Murphy B."/>
            <person name="Murphy L."/>
            <person name="Muzny D.M."/>
            <person name="Nelson D.L."/>
            <person name="Nelson D.R."/>
            <person name="Nelson K.A."/>
            <person name="Nixon K."/>
            <person name="Nusskern D.R."/>
            <person name="Pacleb J.M."/>
            <person name="Palazzolo M."/>
            <person name="Pittman G.S."/>
            <person name="Pan S."/>
            <person name="Pollard J."/>
            <person name="Puri V."/>
            <person name="Reese M.G."/>
            <person name="Reinert K."/>
            <person name="Remington K."/>
            <person name="Saunders R.D.C."/>
            <person name="Scheeler F."/>
            <person name="Shen H."/>
            <person name="Shue B.C."/>
            <person name="Siden-Kiamos I."/>
            <person name="Simpson M."/>
            <person name="Skupski M.P."/>
            <person name="Smith T.J."/>
            <person name="Spier E."/>
            <person name="Spradling A.C."/>
            <person name="Stapleton M."/>
            <person name="Strong R."/>
            <person name="Sun E."/>
            <person name="Svirskas R."/>
            <person name="Tector C."/>
            <person name="Turner R."/>
            <person name="Venter E."/>
            <person name="Wang A.H."/>
            <person name="Wang X."/>
            <person name="Wang Z.-Y."/>
            <person name="Wassarman D.A."/>
            <person name="Weinstock G.M."/>
            <person name="Weissenbach J."/>
            <person name="Williams S.M."/>
            <person name="Woodage T."/>
            <person name="Worley K.C."/>
            <person name="Wu D."/>
            <person name="Yang S."/>
            <person name="Yao Q.A."/>
            <person name="Ye J."/>
            <person name="Yeh R.-F."/>
            <person name="Zaveri J.S."/>
            <person name="Zhan M."/>
            <person name="Zhang G."/>
            <person name="Zhao Q."/>
            <person name="Zheng L."/>
            <person name="Zheng X.H."/>
            <person name="Zhong F.N."/>
            <person name="Zhong W."/>
            <person name="Zhou X."/>
            <person name="Zhu S.C."/>
            <person name="Zhu X."/>
            <person name="Smith H.O."/>
            <person name="Gibbs R.A."/>
            <person name="Myers E.W."/>
            <person name="Rubin G.M."/>
            <person name="Venter J.C."/>
        </authorList>
    </citation>
    <scope>NUCLEOTIDE SEQUENCE [LARGE SCALE GENOMIC DNA]</scope>
    <source>
        <strain>Berkeley</strain>
    </source>
</reference>
<reference key="3">
    <citation type="journal article" date="2002" name="Genome Biol.">
        <title>Annotation of the Drosophila melanogaster euchromatic genome: a systematic review.</title>
        <authorList>
            <person name="Misra S."/>
            <person name="Crosby M.A."/>
            <person name="Mungall C.J."/>
            <person name="Matthews B.B."/>
            <person name="Campbell K.S."/>
            <person name="Hradecky P."/>
            <person name="Huang Y."/>
            <person name="Kaminker J.S."/>
            <person name="Millburn G.H."/>
            <person name="Prochnik S.E."/>
            <person name="Smith C.D."/>
            <person name="Tupy J.L."/>
            <person name="Whitfield E.J."/>
            <person name="Bayraktaroglu L."/>
            <person name="Berman B.P."/>
            <person name="Bettencourt B.R."/>
            <person name="Celniker S.E."/>
            <person name="de Grey A.D.N.J."/>
            <person name="Drysdale R.A."/>
            <person name="Harris N.L."/>
            <person name="Richter J."/>
            <person name="Russo S."/>
            <person name="Schroeder A.J."/>
            <person name="Shu S.Q."/>
            <person name="Stapleton M."/>
            <person name="Yamada C."/>
            <person name="Ashburner M."/>
            <person name="Gelbart W.M."/>
            <person name="Rubin G.M."/>
            <person name="Lewis S.E."/>
        </authorList>
    </citation>
    <scope>GENOME REANNOTATION</scope>
    <source>
        <strain>Berkeley</strain>
    </source>
</reference>
<reference key="4">
    <citation type="journal article" date="2002" name="Genome Biol.">
        <title>A Drosophila full-length cDNA resource.</title>
        <authorList>
            <person name="Stapleton M."/>
            <person name="Carlson J.W."/>
            <person name="Brokstein P."/>
            <person name="Yu C."/>
            <person name="Champe M."/>
            <person name="George R.A."/>
            <person name="Guarin H."/>
            <person name="Kronmiller B."/>
            <person name="Pacleb J.M."/>
            <person name="Park S."/>
            <person name="Wan K.H."/>
            <person name="Rubin G.M."/>
            <person name="Celniker S.E."/>
        </authorList>
    </citation>
    <scope>NUCLEOTIDE SEQUENCE [LARGE SCALE MRNA]</scope>
    <source>
        <strain>Berkeley</strain>
        <tissue>Head</tissue>
    </source>
</reference>
<reference key="5">
    <citation type="journal article" date="1994" name="Proc. Natl. Acad. Sci. U.S.A.">
        <title>The BTB domain, found primarily in zinc finger proteins, defines an evolutionarily conserved family that includes several developmentally regulated genes in Drosophila.</title>
        <authorList>
            <person name="Zollman S."/>
            <person name="Godt D."/>
            <person name="Prive G.G."/>
            <person name="Couderc J.-L."/>
            <person name="Laski F.A."/>
        </authorList>
    </citation>
    <scope>NUCLEOTIDE SEQUENCE [GENOMIC DNA] OF 113-227</scope>
</reference>
<reference key="6">
    <citation type="journal article" date="1987" name="Genes Dev.">
        <title>Dorsal and neural expression of a tyrosine kinase-related Drosophila gene during embryonic development.</title>
        <authorList>
            <person name="Haller J."/>
            <person name="Cote S."/>
            <person name="Broenner G."/>
            <person name="Jaeckle H."/>
        </authorList>
    </citation>
    <scope>NUCLEOTIDE SEQUENCE [GENOMIC DNA] OF 272-1046</scope>
    <scope>TISSUE SPECIFICITY</scope>
</reference>
<reference key="7">
    <citation type="journal article" date="2006" name="Dev. Biol.">
        <title>Single-cell mapping of neural and glial gene expression in the developing Drosophila CNS midline cells.</title>
        <authorList>
            <person name="Wheeler S.R."/>
            <person name="Kearney J.B."/>
            <person name="Guardiola A.R."/>
            <person name="Crews S.T."/>
        </authorList>
    </citation>
    <scope>FUNCTION</scope>
    <scope>TISSUE SPECIFICITY</scope>
</reference>
<keyword id="KW-0238">DNA-binding</keyword>
<keyword id="KW-0539">Nucleus</keyword>
<keyword id="KW-1185">Reference proteome</keyword>